<reference key="1">
    <citation type="journal article" date="2010" name="J. Proteome Res.">
        <title>Molecular diversification of peptide toxins from the tarantula Haplopelma hainanum (Ornithoctonus hainana) venom based on transcriptomic, peptidomic, and genomic analyses.</title>
        <authorList>
            <person name="Tang X."/>
            <person name="Zhang Y."/>
            <person name="Hu W."/>
            <person name="Xu D."/>
            <person name="Tao H."/>
            <person name="Yang X."/>
            <person name="Li Y."/>
            <person name="Jiang L."/>
            <person name="Liang S."/>
        </authorList>
    </citation>
    <scope>NUCLEOTIDE SEQUENCE [LARGE SCALE MRNA]</scope>
    <source>
        <tissue>Venom gland</tissue>
    </source>
</reference>
<accession>D2Y2F7</accession>
<protein>
    <recommendedName>
        <fullName>Kunitz-type U15-theraphotoxin-Hhn1f</fullName>
        <shortName>U15-TRTX-Hhn1f</shortName>
    </recommendedName>
    <alternativeName>
        <fullName>Kunitz-type serine protease inhibitor hainantoxin-XI-6</fullName>
        <shortName>HNTX-XI-6</shortName>
    </alternativeName>
</protein>
<name>VKTF1_CYRHA</name>
<feature type="signal peptide" evidence="3">
    <location>
        <begin position="1"/>
        <end position="27"/>
    </location>
</feature>
<feature type="propeptide" id="PRO_0000400988" evidence="1">
    <location>
        <begin position="28"/>
        <end position="33"/>
    </location>
</feature>
<feature type="peptide" id="PRO_0000400989" description="Kunitz-type U15-theraphotoxin-Hhn1f">
    <location>
        <begin position="34"/>
        <end position="88"/>
    </location>
</feature>
<feature type="domain" description="BPTI/Kunitz inhibitor" evidence="4">
    <location>
        <begin position="37"/>
        <end position="85"/>
    </location>
</feature>
<feature type="site" description="Reactive bond for chymotrypsin" evidence="1">
    <location>
        <begin position="47"/>
        <end position="48"/>
    </location>
</feature>
<feature type="disulfide bond" evidence="4">
    <location>
        <begin position="37"/>
        <end position="85"/>
    </location>
</feature>
<feature type="disulfide bond" evidence="4">
    <location>
        <begin position="60"/>
        <end position="81"/>
    </location>
</feature>
<comment type="function">
    <text evidence="2">Serine protease inhibitor that inhibits trypsin at a molar ratio of 1:1.</text>
</comment>
<comment type="subcellular location">
    <subcellularLocation>
        <location evidence="6">Secreted</location>
    </subcellularLocation>
</comment>
<comment type="tissue specificity">
    <text evidence="6">Expressed by the venom gland.</text>
</comment>
<comment type="similarity">
    <text evidence="5">Belongs to the venom Kunitz-type family. 03 (sub-Kunitz) subfamily.</text>
</comment>
<keyword id="KW-1015">Disulfide bond</keyword>
<keyword id="KW-0646">Protease inhibitor</keyword>
<keyword id="KW-0964">Secreted</keyword>
<keyword id="KW-0722">Serine protease inhibitor</keyword>
<keyword id="KW-0732">Signal</keyword>
<proteinExistence type="inferred from homology"/>
<evidence type="ECO:0000250" key="1"/>
<evidence type="ECO:0000250" key="2">
    <source>
        <dbReference type="UniProtKB" id="P68425"/>
    </source>
</evidence>
<evidence type="ECO:0000255" key="3"/>
<evidence type="ECO:0000255" key="4">
    <source>
        <dbReference type="PROSITE-ProRule" id="PRU00031"/>
    </source>
</evidence>
<evidence type="ECO:0000305" key="5"/>
<evidence type="ECO:0000305" key="6">
    <source>
    </source>
</evidence>
<dbReference type="EMBL" id="GU293034">
    <property type="protein sequence ID" value="ADB56850.1"/>
    <property type="molecule type" value="mRNA"/>
</dbReference>
<dbReference type="SMR" id="D2Y2F7"/>
<dbReference type="ArachnoServer" id="AS001769">
    <property type="toxin name" value="U15-theraphotoxin-Hhn1f"/>
</dbReference>
<dbReference type="GO" id="GO:0005615">
    <property type="term" value="C:extracellular space"/>
    <property type="evidence" value="ECO:0007669"/>
    <property type="project" value="TreeGrafter"/>
</dbReference>
<dbReference type="GO" id="GO:0015459">
    <property type="term" value="F:potassium channel regulator activity"/>
    <property type="evidence" value="ECO:0007669"/>
    <property type="project" value="UniProtKB-KW"/>
</dbReference>
<dbReference type="GO" id="GO:0004867">
    <property type="term" value="F:serine-type endopeptidase inhibitor activity"/>
    <property type="evidence" value="ECO:0007669"/>
    <property type="project" value="UniProtKB-KW"/>
</dbReference>
<dbReference type="GO" id="GO:0090729">
    <property type="term" value="F:toxin activity"/>
    <property type="evidence" value="ECO:0007669"/>
    <property type="project" value="UniProtKB-KW"/>
</dbReference>
<dbReference type="GO" id="GO:0044562">
    <property type="term" value="P:envenomation resulting in negative regulation of voltage-gated potassium channel activity in another organism"/>
    <property type="evidence" value="ECO:0007669"/>
    <property type="project" value="UniProtKB-ARBA"/>
</dbReference>
<dbReference type="CDD" id="cd22598">
    <property type="entry name" value="Kunitz_huwentoxin"/>
    <property type="match status" value="1"/>
</dbReference>
<dbReference type="FunFam" id="4.10.410.10:FF:000020">
    <property type="entry name" value="Collagen, type VI, alpha 3"/>
    <property type="match status" value="1"/>
</dbReference>
<dbReference type="Gene3D" id="4.10.410.10">
    <property type="entry name" value="Pancreatic trypsin inhibitor Kunitz domain"/>
    <property type="match status" value="1"/>
</dbReference>
<dbReference type="InterPro" id="IPR002223">
    <property type="entry name" value="Kunitz_BPTI"/>
</dbReference>
<dbReference type="InterPro" id="IPR036880">
    <property type="entry name" value="Kunitz_BPTI_sf"/>
</dbReference>
<dbReference type="InterPro" id="IPR050098">
    <property type="entry name" value="TFPI/VKTCI-like"/>
</dbReference>
<dbReference type="PANTHER" id="PTHR10083">
    <property type="entry name" value="KUNITZ-TYPE PROTEASE INHIBITOR-RELATED"/>
    <property type="match status" value="1"/>
</dbReference>
<dbReference type="PANTHER" id="PTHR10083:SF328">
    <property type="entry name" value="TISSUE FACTOR PATHWAY INHIBITOR"/>
    <property type="match status" value="1"/>
</dbReference>
<dbReference type="Pfam" id="PF00014">
    <property type="entry name" value="Kunitz_BPTI"/>
    <property type="match status" value="1"/>
</dbReference>
<dbReference type="PRINTS" id="PR00759">
    <property type="entry name" value="BASICPTASE"/>
</dbReference>
<dbReference type="SMART" id="SM00131">
    <property type="entry name" value="KU"/>
    <property type="match status" value="1"/>
</dbReference>
<dbReference type="SUPFAM" id="SSF57362">
    <property type="entry name" value="BPTI-like"/>
    <property type="match status" value="1"/>
</dbReference>
<dbReference type="PROSITE" id="PS50279">
    <property type="entry name" value="BPTI_KUNITZ_2"/>
    <property type="match status" value="1"/>
</dbReference>
<organism>
    <name type="scientific">Cyriopagopus hainanus</name>
    <name type="common">Chinese bird spider</name>
    <name type="synonym">Haplopelma hainanum</name>
    <dbReference type="NCBI Taxonomy" id="209901"/>
    <lineage>
        <taxon>Eukaryota</taxon>
        <taxon>Metazoa</taxon>
        <taxon>Ecdysozoa</taxon>
        <taxon>Arthropoda</taxon>
        <taxon>Chelicerata</taxon>
        <taxon>Arachnida</taxon>
        <taxon>Araneae</taxon>
        <taxon>Mygalomorphae</taxon>
        <taxon>Theraphosidae</taxon>
        <taxon>Haplopelma</taxon>
    </lineage>
</organism>
<sequence length="88" mass="9832">MGTARFLRAVLLLSVLLMVTFPALLSAEHHDGRVGICRLPSDSGDCLRFFEMWYFDGTTCTKFVYGGYGGNNNRFPTEKACMKRCAKA</sequence>